<feature type="transit peptide" description="Mitochondrion" evidence="2">
    <location>
        <begin position="1"/>
        <end position="27"/>
    </location>
</feature>
<feature type="chain" id="PRO_0000247501" description="Succinate--CoA ligase [ADP-forming] subunit beta, mitochondrial">
    <location>
        <begin position="28"/>
        <end position="422"/>
    </location>
</feature>
<feature type="domain" description="ATP-grasp" evidence="1">
    <location>
        <begin position="36"/>
        <end position="279"/>
    </location>
</feature>
<feature type="binding site" evidence="1">
    <location>
        <position position="75"/>
    </location>
    <ligand>
        <name>ATP</name>
        <dbReference type="ChEBI" id="CHEBI:30616"/>
    </ligand>
</feature>
<feature type="binding site" evidence="1">
    <location>
        <begin position="82"/>
        <end position="84"/>
    </location>
    <ligand>
        <name>ATP</name>
        <dbReference type="ChEBI" id="CHEBI:30616"/>
    </ligand>
</feature>
<feature type="binding site" evidence="1">
    <location>
        <position position="142"/>
    </location>
    <ligand>
        <name>ATP</name>
        <dbReference type="ChEBI" id="CHEBI:30616"/>
    </ligand>
</feature>
<feature type="binding site" evidence="1">
    <location>
        <position position="234"/>
    </location>
    <ligand>
        <name>Mg(2+)</name>
        <dbReference type="ChEBI" id="CHEBI:18420"/>
    </ligand>
</feature>
<feature type="binding site" evidence="1">
    <location>
        <position position="248"/>
    </location>
    <ligand>
        <name>Mg(2+)</name>
        <dbReference type="ChEBI" id="CHEBI:18420"/>
    </ligand>
</feature>
<feature type="binding site" evidence="1">
    <location>
        <position position="299"/>
    </location>
    <ligand>
        <name>substrate</name>
        <note>ligand shared with subunit alpha</note>
    </ligand>
</feature>
<feature type="binding site" evidence="1">
    <location>
        <begin position="356"/>
        <end position="358"/>
    </location>
    <ligand>
        <name>substrate</name>
        <note>ligand shared with subunit alpha</note>
    </ligand>
</feature>
<sequence length="422" mass="45091">MVRGSLGKLASRALSVAGKWQHQQLRRLNIHEYQGAELMGKYGINVPRGAAAGSVEEVKNTLKNVFPSEKEIVVKSQILAGGRGLGTFKSGLQGGVHIVKAEEAESLAAKMLGQILVTKQTGPQGKIVSKVYLCEKLSLVNEMYFAITLDRNTAGPLIIACSKGGTSIEDLAEKYPDMIIKVPIDVFKGITDDDAAKVVDGLAPKTADRQSSIEQIKKLYELFCKSDCTLLEINPLAETADNKLVAADAKLNFDDNAAFRQKEIFAMRDTTQEDPREVAAAKADLNYIGLDGEIGCMVNGAGLAMATMDIIKLHGGTPANFLDVGGSASEGQVVEAFKILTSDDRVKAILVNIFGGIMKCDVIASGIVNAAKQVDLKVPVVVRLEGTNVDQGKRILKESGMTLITAEDLDDAAEKAVKASVK</sequence>
<dbReference type="EC" id="6.2.1.5" evidence="1"/>
<dbReference type="EMBL" id="AP004053">
    <property type="protein sequence ID" value="BAD21546.1"/>
    <property type="molecule type" value="Genomic_DNA"/>
</dbReference>
<dbReference type="EMBL" id="AP008208">
    <property type="protein sequence ID" value="BAF09377.1"/>
    <property type="molecule type" value="Genomic_DNA"/>
</dbReference>
<dbReference type="EMBL" id="AP014958">
    <property type="protein sequence ID" value="BAS79828.1"/>
    <property type="molecule type" value="Genomic_DNA"/>
</dbReference>
<dbReference type="EMBL" id="CM000139">
    <property type="protein sequence ID" value="EAZ23853.1"/>
    <property type="molecule type" value="Genomic_DNA"/>
</dbReference>
<dbReference type="EMBL" id="AK101006">
    <property type="protein sequence ID" value="BAG94878.1"/>
    <property type="molecule type" value="mRNA"/>
</dbReference>
<dbReference type="RefSeq" id="XP_015625812.1">
    <property type="nucleotide sequence ID" value="XM_015770326.1"/>
</dbReference>
<dbReference type="SMR" id="Q6K9N6"/>
<dbReference type="FunCoup" id="Q6K9N6">
    <property type="interactions" value="3184"/>
</dbReference>
<dbReference type="STRING" id="39947.Q6K9N6"/>
<dbReference type="PaxDb" id="39947-Q6K9N6"/>
<dbReference type="EnsemblPlants" id="Os02t0621700-01">
    <property type="protein sequence ID" value="Os02t0621700-01"/>
    <property type="gene ID" value="Os02g0621700"/>
</dbReference>
<dbReference type="Gramene" id="Os02t0621700-01">
    <property type="protein sequence ID" value="Os02t0621700-01"/>
    <property type="gene ID" value="Os02g0621700"/>
</dbReference>
<dbReference type="KEGG" id="dosa:Os02g0621700"/>
<dbReference type="eggNOG" id="KOG2799">
    <property type="taxonomic scope" value="Eukaryota"/>
</dbReference>
<dbReference type="HOGENOM" id="CLU_037430_0_0_1"/>
<dbReference type="InParanoid" id="Q6K9N6"/>
<dbReference type="OMA" id="ITACDEV"/>
<dbReference type="OrthoDB" id="1552at2759"/>
<dbReference type="PlantReactome" id="R-OSA-1119533">
    <property type="pathway name" value="TCA cycle (plant)"/>
</dbReference>
<dbReference type="UniPathway" id="UPA00223">
    <property type="reaction ID" value="UER00999"/>
</dbReference>
<dbReference type="Proteomes" id="UP000000763">
    <property type="component" value="Chromosome 2"/>
</dbReference>
<dbReference type="Proteomes" id="UP000007752">
    <property type="component" value="Chromosome 2"/>
</dbReference>
<dbReference type="Proteomes" id="UP000059680">
    <property type="component" value="Chromosome 2"/>
</dbReference>
<dbReference type="ExpressionAtlas" id="Q6K9N6">
    <property type="expression patterns" value="baseline and differential"/>
</dbReference>
<dbReference type="GO" id="GO:0005739">
    <property type="term" value="C:mitochondrion"/>
    <property type="evidence" value="ECO:0000318"/>
    <property type="project" value="GO_Central"/>
</dbReference>
<dbReference type="GO" id="GO:0042709">
    <property type="term" value="C:succinate-CoA ligase complex"/>
    <property type="evidence" value="ECO:0000318"/>
    <property type="project" value="GO_Central"/>
</dbReference>
<dbReference type="GO" id="GO:0005524">
    <property type="term" value="F:ATP binding"/>
    <property type="evidence" value="ECO:0007669"/>
    <property type="project" value="UniProtKB-UniRule"/>
</dbReference>
<dbReference type="GO" id="GO:0000287">
    <property type="term" value="F:magnesium ion binding"/>
    <property type="evidence" value="ECO:0007669"/>
    <property type="project" value="UniProtKB-UniRule"/>
</dbReference>
<dbReference type="GO" id="GO:0004775">
    <property type="term" value="F:succinate-CoA ligase (ADP-forming) activity"/>
    <property type="evidence" value="ECO:0000318"/>
    <property type="project" value="GO_Central"/>
</dbReference>
<dbReference type="GO" id="GO:0006104">
    <property type="term" value="P:succinyl-CoA metabolic process"/>
    <property type="evidence" value="ECO:0000318"/>
    <property type="project" value="GO_Central"/>
</dbReference>
<dbReference type="GO" id="GO:0006099">
    <property type="term" value="P:tricarboxylic acid cycle"/>
    <property type="evidence" value="ECO:0000318"/>
    <property type="project" value="GO_Central"/>
</dbReference>
<dbReference type="FunFam" id="3.30.470.20:FF:000002">
    <property type="entry name" value="Succinate--CoA ligase [ADP-forming] subunit beta"/>
    <property type="match status" value="1"/>
</dbReference>
<dbReference type="FunFam" id="3.40.50.261:FF:000001">
    <property type="entry name" value="Succinate--CoA ligase [ADP-forming] subunit beta"/>
    <property type="match status" value="1"/>
</dbReference>
<dbReference type="FunFam" id="3.30.1490.20:FF:000019">
    <property type="entry name" value="Succinate--CoA ligase [ADP-forming] subunit beta, mitochondrial"/>
    <property type="match status" value="1"/>
</dbReference>
<dbReference type="Gene3D" id="3.30.1490.20">
    <property type="entry name" value="ATP-grasp fold, A domain"/>
    <property type="match status" value="1"/>
</dbReference>
<dbReference type="Gene3D" id="3.30.470.20">
    <property type="entry name" value="ATP-grasp fold, B domain"/>
    <property type="match status" value="1"/>
</dbReference>
<dbReference type="Gene3D" id="3.40.50.261">
    <property type="entry name" value="Succinyl-CoA synthetase domains"/>
    <property type="match status" value="1"/>
</dbReference>
<dbReference type="HAMAP" id="MF_00558">
    <property type="entry name" value="Succ_CoA_beta"/>
    <property type="match status" value="1"/>
</dbReference>
<dbReference type="InterPro" id="IPR011761">
    <property type="entry name" value="ATP-grasp"/>
</dbReference>
<dbReference type="InterPro" id="IPR013650">
    <property type="entry name" value="ATP-grasp_succ-CoA_synth-type"/>
</dbReference>
<dbReference type="InterPro" id="IPR013815">
    <property type="entry name" value="ATP_grasp_subdomain_1"/>
</dbReference>
<dbReference type="InterPro" id="IPR017866">
    <property type="entry name" value="Succ-CoA_synthase_bsu_CS"/>
</dbReference>
<dbReference type="InterPro" id="IPR005811">
    <property type="entry name" value="SUCC_ACL_C"/>
</dbReference>
<dbReference type="InterPro" id="IPR005809">
    <property type="entry name" value="Succ_CoA_ligase-like_bsu"/>
</dbReference>
<dbReference type="InterPro" id="IPR016102">
    <property type="entry name" value="Succinyl-CoA_synth-like"/>
</dbReference>
<dbReference type="NCBIfam" id="NF001913">
    <property type="entry name" value="PRK00696.1"/>
    <property type="match status" value="1"/>
</dbReference>
<dbReference type="NCBIfam" id="TIGR01016">
    <property type="entry name" value="sucCoAbeta"/>
    <property type="match status" value="1"/>
</dbReference>
<dbReference type="PANTHER" id="PTHR11815:SF10">
    <property type="entry name" value="SUCCINATE--COA LIGASE [GDP-FORMING] SUBUNIT BETA, MITOCHONDRIAL"/>
    <property type="match status" value="1"/>
</dbReference>
<dbReference type="PANTHER" id="PTHR11815">
    <property type="entry name" value="SUCCINYL-COA SYNTHETASE BETA CHAIN"/>
    <property type="match status" value="1"/>
</dbReference>
<dbReference type="Pfam" id="PF08442">
    <property type="entry name" value="ATP-grasp_2"/>
    <property type="match status" value="1"/>
</dbReference>
<dbReference type="Pfam" id="PF00549">
    <property type="entry name" value="Ligase_CoA"/>
    <property type="match status" value="1"/>
</dbReference>
<dbReference type="PIRSF" id="PIRSF001554">
    <property type="entry name" value="SucCS_beta"/>
    <property type="match status" value="1"/>
</dbReference>
<dbReference type="SUPFAM" id="SSF56059">
    <property type="entry name" value="Glutathione synthetase ATP-binding domain-like"/>
    <property type="match status" value="1"/>
</dbReference>
<dbReference type="SUPFAM" id="SSF52210">
    <property type="entry name" value="Succinyl-CoA synthetase domains"/>
    <property type="match status" value="1"/>
</dbReference>
<dbReference type="PROSITE" id="PS50975">
    <property type="entry name" value="ATP_GRASP"/>
    <property type="match status" value="1"/>
</dbReference>
<dbReference type="PROSITE" id="PS01217">
    <property type="entry name" value="SUCCINYL_COA_LIG_3"/>
    <property type="match status" value="1"/>
</dbReference>
<evidence type="ECO:0000255" key="1">
    <source>
        <dbReference type="HAMAP-Rule" id="MF_03219"/>
    </source>
</evidence>
<evidence type="ECO:0000269" key="2">
    <source>
    </source>
</evidence>
<evidence type="ECO:0000312" key="3">
    <source>
        <dbReference type="EMBL" id="EAZ23853.1"/>
    </source>
</evidence>
<protein>
    <recommendedName>
        <fullName evidence="1">Succinate--CoA ligase [ADP-forming] subunit beta, mitochondrial</fullName>
        <ecNumber evidence="1">6.2.1.5</ecNumber>
    </recommendedName>
    <alternativeName>
        <fullName evidence="1">Succinyl-CoA synthetase beta chain</fullName>
        <shortName evidence="1">SCS-beta</shortName>
    </alternativeName>
</protein>
<name>SUCB_ORYSJ</name>
<accession>Q6K9N6</accession>
<accession>Q0DZG1</accession>
<gene>
    <name type="ordered locus">Os02g0621700</name>
    <name type="ordered locus">LOC_Os02g40830</name>
    <name type="ORF">OJ1234_B11.18</name>
    <name evidence="3" type="ORF">OsJ_07569</name>
</gene>
<keyword id="KW-0067">ATP-binding</keyword>
<keyword id="KW-0903">Direct protein sequencing</keyword>
<keyword id="KW-0436">Ligase</keyword>
<keyword id="KW-0460">Magnesium</keyword>
<keyword id="KW-0479">Metal-binding</keyword>
<keyword id="KW-0496">Mitochondrion</keyword>
<keyword id="KW-0547">Nucleotide-binding</keyword>
<keyword id="KW-1185">Reference proteome</keyword>
<keyword id="KW-0809">Transit peptide</keyword>
<keyword id="KW-0816">Tricarboxylic acid cycle</keyword>
<organism>
    <name type="scientific">Oryza sativa subsp. japonica</name>
    <name type="common">Rice</name>
    <dbReference type="NCBI Taxonomy" id="39947"/>
    <lineage>
        <taxon>Eukaryota</taxon>
        <taxon>Viridiplantae</taxon>
        <taxon>Streptophyta</taxon>
        <taxon>Embryophyta</taxon>
        <taxon>Tracheophyta</taxon>
        <taxon>Spermatophyta</taxon>
        <taxon>Magnoliopsida</taxon>
        <taxon>Liliopsida</taxon>
        <taxon>Poales</taxon>
        <taxon>Poaceae</taxon>
        <taxon>BOP clade</taxon>
        <taxon>Oryzoideae</taxon>
        <taxon>Oryzeae</taxon>
        <taxon>Oryzinae</taxon>
        <taxon>Oryza</taxon>
        <taxon>Oryza sativa</taxon>
    </lineage>
</organism>
<proteinExistence type="evidence at protein level"/>
<comment type="function">
    <text evidence="1">Succinyl-CoA synthetase functions in the citric acid cycle (TCA), coupling the hydrolysis of succinyl-CoA to the synthesis of ATP and thus represents the only step of substrate-level phosphorylation in the TCA. The beta subunit provides nucleotide specificity of the enzyme and binds the substrate succinate, while the binding sites for coenzyme A and phosphate are found in the alpha subunit.</text>
</comment>
<comment type="catalytic activity">
    <reaction evidence="1">
        <text>succinate + ATP + CoA = succinyl-CoA + ADP + phosphate</text>
        <dbReference type="Rhea" id="RHEA:17661"/>
        <dbReference type="ChEBI" id="CHEBI:30031"/>
        <dbReference type="ChEBI" id="CHEBI:30616"/>
        <dbReference type="ChEBI" id="CHEBI:43474"/>
        <dbReference type="ChEBI" id="CHEBI:57287"/>
        <dbReference type="ChEBI" id="CHEBI:57292"/>
        <dbReference type="ChEBI" id="CHEBI:456216"/>
        <dbReference type="EC" id="6.2.1.5"/>
    </reaction>
</comment>
<comment type="cofactor">
    <cofactor evidence="1">
        <name>Mg(2+)</name>
        <dbReference type="ChEBI" id="CHEBI:18420"/>
    </cofactor>
    <text evidence="1">Binds 1 Mg(2+) ion per subunit.</text>
</comment>
<comment type="pathway">
    <text evidence="1">Carbohydrate metabolism; tricarboxylic acid cycle; succinate from succinyl-CoA (ligase route): step 1/1.</text>
</comment>
<comment type="subunit">
    <text evidence="1">Heterodimer of an alpha and a beta subunit.</text>
</comment>
<comment type="subcellular location">
    <subcellularLocation>
        <location evidence="1">Mitochondrion</location>
    </subcellularLocation>
</comment>
<comment type="similarity">
    <text evidence="1">Belongs to the succinate/malate CoA ligase beta subunit family.</text>
</comment>
<reference key="1">
    <citation type="journal article" date="2005" name="Nature">
        <title>The map-based sequence of the rice genome.</title>
        <authorList>
            <consortium name="International rice genome sequencing project (IRGSP)"/>
        </authorList>
    </citation>
    <scope>NUCLEOTIDE SEQUENCE [LARGE SCALE GENOMIC DNA]</scope>
    <source>
        <strain>cv. Nipponbare</strain>
    </source>
</reference>
<reference key="2">
    <citation type="journal article" date="2008" name="Nucleic Acids Res.">
        <title>The rice annotation project database (RAP-DB): 2008 update.</title>
        <authorList>
            <consortium name="The rice annotation project (RAP)"/>
        </authorList>
    </citation>
    <scope>GENOME REANNOTATION</scope>
    <source>
        <strain>cv. Nipponbare</strain>
    </source>
</reference>
<reference key="3">
    <citation type="journal article" date="2013" name="Rice">
        <title>Improvement of the Oryza sativa Nipponbare reference genome using next generation sequence and optical map data.</title>
        <authorList>
            <person name="Kawahara Y."/>
            <person name="de la Bastide M."/>
            <person name="Hamilton J.P."/>
            <person name="Kanamori H."/>
            <person name="McCombie W.R."/>
            <person name="Ouyang S."/>
            <person name="Schwartz D.C."/>
            <person name="Tanaka T."/>
            <person name="Wu J."/>
            <person name="Zhou S."/>
            <person name="Childs K.L."/>
            <person name="Davidson R.M."/>
            <person name="Lin H."/>
            <person name="Quesada-Ocampo L."/>
            <person name="Vaillancourt B."/>
            <person name="Sakai H."/>
            <person name="Lee S.S."/>
            <person name="Kim J."/>
            <person name="Numa H."/>
            <person name="Itoh T."/>
            <person name="Buell C.R."/>
            <person name="Matsumoto T."/>
        </authorList>
    </citation>
    <scope>GENOME REANNOTATION</scope>
    <source>
        <strain>cv. Nipponbare</strain>
    </source>
</reference>
<reference key="4">
    <citation type="journal article" date="2005" name="PLoS Biol.">
        <title>The genomes of Oryza sativa: a history of duplications.</title>
        <authorList>
            <person name="Yu J."/>
            <person name="Wang J."/>
            <person name="Lin W."/>
            <person name="Li S."/>
            <person name="Li H."/>
            <person name="Zhou J."/>
            <person name="Ni P."/>
            <person name="Dong W."/>
            <person name="Hu S."/>
            <person name="Zeng C."/>
            <person name="Zhang J."/>
            <person name="Zhang Y."/>
            <person name="Li R."/>
            <person name="Xu Z."/>
            <person name="Li S."/>
            <person name="Li X."/>
            <person name="Zheng H."/>
            <person name="Cong L."/>
            <person name="Lin L."/>
            <person name="Yin J."/>
            <person name="Geng J."/>
            <person name="Li G."/>
            <person name="Shi J."/>
            <person name="Liu J."/>
            <person name="Lv H."/>
            <person name="Li J."/>
            <person name="Wang J."/>
            <person name="Deng Y."/>
            <person name="Ran L."/>
            <person name="Shi X."/>
            <person name="Wang X."/>
            <person name="Wu Q."/>
            <person name="Li C."/>
            <person name="Ren X."/>
            <person name="Wang J."/>
            <person name="Wang X."/>
            <person name="Li D."/>
            <person name="Liu D."/>
            <person name="Zhang X."/>
            <person name="Ji Z."/>
            <person name="Zhao W."/>
            <person name="Sun Y."/>
            <person name="Zhang Z."/>
            <person name="Bao J."/>
            <person name="Han Y."/>
            <person name="Dong L."/>
            <person name="Ji J."/>
            <person name="Chen P."/>
            <person name="Wu S."/>
            <person name="Liu J."/>
            <person name="Xiao Y."/>
            <person name="Bu D."/>
            <person name="Tan J."/>
            <person name="Yang L."/>
            <person name="Ye C."/>
            <person name="Zhang J."/>
            <person name="Xu J."/>
            <person name="Zhou Y."/>
            <person name="Yu Y."/>
            <person name="Zhang B."/>
            <person name="Zhuang S."/>
            <person name="Wei H."/>
            <person name="Liu B."/>
            <person name="Lei M."/>
            <person name="Yu H."/>
            <person name="Li Y."/>
            <person name="Xu H."/>
            <person name="Wei S."/>
            <person name="He X."/>
            <person name="Fang L."/>
            <person name="Zhang Z."/>
            <person name="Zhang Y."/>
            <person name="Huang X."/>
            <person name="Su Z."/>
            <person name="Tong W."/>
            <person name="Li J."/>
            <person name="Tong Z."/>
            <person name="Li S."/>
            <person name="Ye J."/>
            <person name="Wang L."/>
            <person name="Fang L."/>
            <person name="Lei T."/>
            <person name="Chen C.-S."/>
            <person name="Chen H.-C."/>
            <person name="Xu Z."/>
            <person name="Li H."/>
            <person name="Huang H."/>
            <person name="Zhang F."/>
            <person name="Xu H."/>
            <person name="Li N."/>
            <person name="Zhao C."/>
            <person name="Li S."/>
            <person name="Dong L."/>
            <person name="Huang Y."/>
            <person name="Li L."/>
            <person name="Xi Y."/>
            <person name="Qi Q."/>
            <person name="Li W."/>
            <person name="Zhang B."/>
            <person name="Hu W."/>
            <person name="Zhang Y."/>
            <person name="Tian X."/>
            <person name="Jiao Y."/>
            <person name="Liang X."/>
            <person name="Jin J."/>
            <person name="Gao L."/>
            <person name="Zheng W."/>
            <person name="Hao B."/>
            <person name="Liu S.-M."/>
            <person name="Wang W."/>
            <person name="Yuan L."/>
            <person name="Cao M."/>
            <person name="McDermott J."/>
            <person name="Samudrala R."/>
            <person name="Wang J."/>
            <person name="Wong G.K.-S."/>
            <person name="Yang H."/>
        </authorList>
    </citation>
    <scope>NUCLEOTIDE SEQUENCE [LARGE SCALE GENOMIC DNA]</scope>
    <source>
        <strain>cv. Nipponbare</strain>
    </source>
</reference>
<reference key="5">
    <citation type="journal article" date="2003" name="Science">
        <title>Collection, mapping, and annotation of over 28,000 cDNA clones from japonica rice.</title>
        <authorList>
            <consortium name="The rice full-length cDNA consortium"/>
        </authorList>
    </citation>
    <scope>NUCLEOTIDE SEQUENCE [LARGE SCALE MRNA]</scope>
    <source>
        <strain>cv. Nipponbare</strain>
    </source>
</reference>
<reference key="6">
    <citation type="journal article" date="2006" name="Proteomics">
        <title>Proteomic analysis of rice leaf, stem and root tissues during growth course.</title>
        <authorList>
            <person name="Nozu Y."/>
            <person name="Tsugita A."/>
            <person name="Kamijo K."/>
        </authorList>
    </citation>
    <scope>PROTEIN SEQUENCE [LARGE SCALE ANALYSIS] OF 28-34</scope>
    <scope>IDENTIFICATION BY MASS SPECTROMETRY</scope>
    <source>
        <strain>cv. Nipponbare</strain>
    </source>
</reference>